<reference key="1">
    <citation type="journal article" date="2004" name="Science">
        <title>The 1.2-megabase genome sequence of Mimivirus.</title>
        <authorList>
            <person name="Raoult D."/>
            <person name="Audic S."/>
            <person name="Robert C."/>
            <person name="Abergel C."/>
            <person name="Renesto P."/>
            <person name="Ogata H."/>
            <person name="La Scola B."/>
            <person name="Susan M."/>
            <person name="Claverie J.-M."/>
        </authorList>
    </citation>
    <scope>NUCLEOTIDE SEQUENCE [LARGE SCALE GENOMIC DNA]</scope>
    <source>
        <strain>Rowbotham-Bradford</strain>
    </source>
</reference>
<dbReference type="EC" id="4.2.1.46"/>
<dbReference type="EMBL" id="AY653733">
    <property type="protein sequence ID" value="AAV50416.1"/>
    <property type="molecule type" value="Genomic_DNA"/>
</dbReference>
<dbReference type="PDB" id="6VLO">
    <property type="method" value="X-ray"/>
    <property type="resolution" value="2.05 A"/>
    <property type="chains" value="A/B/C/D=1-323"/>
</dbReference>
<dbReference type="PDBsum" id="6VLO"/>
<dbReference type="SMR" id="Q5UR12"/>
<dbReference type="KEGG" id="vg:9924741"/>
<dbReference type="OrthoDB" id="11993at10239"/>
<dbReference type="Proteomes" id="UP000001134">
    <property type="component" value="Genome"/>
</dbReference>
<dbReference type="GO" id="GO:0008460">
    <property type="term" value="F:dTDP-glucose 4,6-dehydratase activity"/>
    <property type="evidence" value="ECO:0007669"/>
    <property type="project" value="UniProtKB-EC"/>
</dbReference>
<dbReference type="GO" id="GO:0009225">
    <property type="term" value="P:nucleotide-sugar metabolic process"/>
    <property type="evidence" value="ECO:0007669"/>
    <property type="project" value="InterPro"/>
</dbReference>
<dbReference type="CDD" id="cd05246">
    <property type="entry name" value="dTDP_GD_SDR_e"/>
    <property type="match status" value="1"/>
</dbReference>
<dbReference type="FunFam" id="3.40.50.720:FF:000304">
    <property type="entry name" value="UDP-glucose 4,6-dehydratase"/>
    <property type="match status" value="1"/>
</dbReference>
<dbReference type="Gene3D" id="3.40.50.720">
    <property type="entry name" value="NAD(P)-binding Rossmann-like Domain"/>
    <property type="match status" value="1"/>
</dbReference>
<dbReference type="Gene3D" id="3.90.25.10">
    <property type="entry name" value="UDP-galactose 4-epimerase, domain 1"/>
    <property type="match status" value="1"/>
</dbReference>
<dbReference type="InterPro" id="IPR005888">
    <property type="entry name" value="dTDP_Gluc_deHydtase"/>
</dbReference>
<dbReference type="InterPro" id="IPR016040">
    <property type="entry name" value="NAD(P)-bd_dom"/>
</dbReference>
<dbReference type="InterPro" id="IPR036291">
    <property type="entry name" value="NAD(P)-bd_dom_sf"/>
</dbReference>
<dbReference type="PANTHER" id="PTHR43000">
    <property type="entry name" value="DTDP-D-GLUCOSE 4,6-DEHYDRATASE-RELATED"/>
    <property type="match status" value="1"/>
</dbReference>
<dbReference type="Pfam" id="PF16363">
    <property type="entry name" value="GDP_Man_Dehyd"/>
    <property type="match status" value="1"/>
</dbReference>
<dbReference type="SUPFAM" id="SSF51735">
    <property type="entry name" value="NAD(P)-binding Rossmann-fold domains"/>
    <property type="match status" value="1"/>
</dbReference>
<comment type="catalytic activity">
    <reaction>
        <text>dTDP-alpha-D-glucose = dTDP-4-dehydro-6-deoxy-alpha-D-glucose + H2O</text>
        <dbReference type="Rhea" id="RHEA:17221"/>
        <dbReference type="ChEBI" id="CHEBI:15377"/>
        <dbReference type="ChEBI" id="CHEBI:57477"/>
        <dbReference type="ChEBI" id="CHEBI:57649"/>
        <dbReference type="EC" id="4.2.1.46"/>
    </reaction>
</comment>
<comment type="cofactor">
    <cofactor evidence="1">
        <name>NAD(+)</name>
        <dbReference type="ChEBI" id="CHEBI:57540"/>
    </cofactor>
</comment>
<comment type="similarity">
    <text evidence="2">Belongs to the NAD(P)-dependent epimerase/dehydratase family. dTDP-glucose dehydratase subfamily.</text>
</comment>
<organism>
    <name type="scientific">Acanthamoeba polyphaga mimivirus</name>
    <name type="common">APMV</name>
    <dbReference type="NCBI Taxonomy" id="212035"/>
    <lineage>
        <taxon>Viruses</taxon>
        <taxon>Varidnaviria</taxon>
        <taxon>Bamfordvirae</taxon>
        <taxon>Nucleocytoviricota</taxon>
        <taxon>Megaviricetes</taxon>
        <taxon>Imitervirales</taxon>
        <taxon>Mimiviridae</taxon>
        <taxon>Megamimivirinae</taxon>
        <taxon>Mimivirus</taxon>
        <taxon>Mimivirus bradfordmassiliense</taxon>
    </lineage>
</organism>
<evidence type="ECO:0000250" key="1"/>
<evidence type="ECO:0000305" key="2"/>
<evidence type="ECO:0007829" key="3">
    <source>
        <dbReference type="PDB" id="6VLO"/>
    </source>
</evidence>
<organismHost>
    <name type="scientific">Acanthamoeba polyphaga</name>
    <name type="common">Amoeba</name>
    <dbReference type="NCBI Taxonomy" id="5757"/>
</organismHost>
<protein>
    <recommendedName>
        <fullName>Putative dTDP-D-glucose 4,6-dehydratase</fullName>
        <ecNumber>4.2.1.46</ecNumber>
    </recommendedName>
</protein>
<gene>
    <name type="ordered locus">MIMI_R141</name>
</gene>
<feature type="chain" id="PRO_0000309205" description="Putative dTDP-D-glucose 4,6-dehydratase">
    <location>
        <begin position="1"/>
        <end position="323"/>
    </location>
</feature>
<feature type="active site" description="Proton donor" evidence="1">
    <location>
        <position position="125"/>
    </location>
</feature>
<feature type="active site" description="Proton acceptor" evidence="1">
    <location>
        <position position="126"/>
    </location>
</feature>
<feature type="active site" description="Proton acceptor" evidence="1">
    <location>
        <position position="149"/>
    </location>
</feature>
<feature type="binding site" evidence="1">
    <location>
        <position position="124"/>
    </location>
    <ligand>
        <name>substrate</name>
    </ligand>
</feature>
<feature type="strand" evidence="3">
    <location>
        <begin position="2"/>
        <end position="7"/>
    </location>
</feature>
<feature type="turn" evidence="3">
    <location>
        <begin position="8"/>
        <end position="10"/>
    </location>
</feature>
<feature type="helix" evidence="3">
    <location>
        <begin position="12"/>
        <end position="24"/>
    </location>
</feature>
<feature type="strand" evidence="3">
    <location>
        <begin position="29"/>
        <end position="34"/>
    </location>
</feature>
<feature type="helix" evidence="3">
    <location>
        <begin position="42"/>
        <end position="44"/>
    </location>
</feature>
<feature type="strand" evidence="3">
    <location>
        <begin position="51"/>
        <end position="55"/>
    </location>
</feature>
<feature type="helix" evidence="3">
    <location>
        <begin position="61"/>
        <end position="70"/>
    </location>
</feature>
<feature type="strand" evidence="3">
    <location>
        <begin position="75"/>
        <end position="78"/>
    </location>
</feature>
<feature type="helix" evidence="3">
    <location>
        <begin position="91"/>
        <end position="99"/>
    </location>
</feature>
<feature type="helix" evidence="3">
    <location>
        <begin position="101"/>
        <end position="113"/>
    </location>
</feature>
<feature type="strand" evidence="3">
    <location>
        <begin position="117"/>
        <end position="124"/>
    </location>
</feature>
<feature type="strand" evidence="3">
    <location>
        <begin position="129"/>
        <end position="132"/>
    </location>
</feature>
<feature type="turn" evidence="3">
    <location>
        <begin position="134"/>
        <end position="136"/>
    </location>
</feature>
<feature type="strand" evidence="3">
    <location>
        <begin position="139"/>
        <end position="143"/>
    </location>
</feature>
<feature type="helix" evidence="3">
    <location>
        <begin position="148"/>
        <end position="167"/>
    </location>
</feature>
<feature type="strand" evidence="3">
    <location>
        <begin position="171"/>
        <end position="176"/>
    </location>
</feature>
<feature type="strand" evidence="3">
    <location>
        <begin position="178"/>
        <end position="181"/>
    </location>
</feature>
<feature type="helix" evidence="3">
    <location>
        <begin position="189"/>
        <end position="198"/>
    </location>
</feature>
<feature type="strand" evidence="3">
    <location>
        <begin position="203"/>
        <end position="206"/>
    </location>
</feature>
<feature type="strand" evidence="3">
    <location>
        <begin position="212"/>
        <end position="217"/>
    </location>
</feature>
<feature type="helix" evidence="3">
    <location>
        <begin position="218"/>
        <end position="231"/>
    </location>
</feature>
<feature type="strand" evidence="3">
    <location>
        <begin position="237"/>
        <end position="240"/>
    </location>
</feature>
<feature type="strand" evidence="3">
    <location>
        <begin position="245"/>
        <end position="247"/>
    </location>
</feature>
<feature type="helix" evidence="3">
    <location>
        <begin position="248"/>
        <end position="259"/>
    </location>
</feature>
<feature type="turn" evidence="3">
    <location>
        <begin position="264"/>
        <end position="266"/>
    </location>
</feature>
<feature type="strand" evidence="3">
    <location>
        <begin position="267"/>
        <end position="270"/>
    </location>
</feature>
<feature type="helix" evidence="3">
    <location>
        <begin position="285"/>
        <end position="289"/>
    </location>
</feature>
<feature type="helix" evidence="3">
    <location>
        <begin position="299"/>
        <end position="313"/>
    </location>
</feature>
<feature type="helix" evidence="3">
    <location>
        <begin position="314"/>
        <end position="316"/>
    </location>
</feature>
<proteinExistence type="evidence at protein level"/>
<keyword id="KW-0002">3D-structure</keyword>
<keyword id="KW-0456">Lyase</keyword>
<keyword id="KW-0520">NAD</keyword>
<keyword id="KW-1185">Reference proteome</keyword>
<accession>Q5UR12</accession>
<name>TGDS_MIMIV</name>
<sequence length="323" mass="36874">MKNILVTGGLGFIGSNFVNHISSKYDNVNIYVYDIGDYCASVENVEWNNRTKLIKGDIRNFDLIMHTLTEHEIDTIVHFAAHSHVDNSFKNSLAFTETNVFGTHVLLECSRMYGKLKLFFHMSTDEVYGEIDTTDTSREVSLLCPTNPYAATKAGAEHIVKSYFLSYKLPIIIARCNNVYGRNQYPEKLIPKFICSLLDGKKLHIQGTGNSRRNFIHAIDVADAVDLVINNGVIGETYNIGVTNEHSVLDVAQILCDIAGVNLENQLEYVPDRLFNDFRYNITNDKIKSLGWEQSRKDFKKELVELFDWYKVNRHRYNIPGSQ</sequence>